<sequence length="49" mass="5561">MKKKVTLACKNCGNRNYTTMKSSAALAERLEVKKYCNNCNSHTVHLETK</sequence>
<feature type="chain" id="PRO_0000356394" description="Large ribosomal subunit protein bL33A">
    <location>
        <begin position="1"/>
        <end position="49"/>
    </location>
</feature>
<dbReference type="EMBL" id="AE017333">
    <property type="protein sequence ID" value="AAU39091.1"/>
    <property type="molecule type" value="Genomic_DNA"/>
</dbReference>
<dbReference type="EMBL" id="CP000002">
    <property type="protein sequence ID" value="ABP97342.1"/>
    <property type="molecule type" value="Genomic_DNA"/>
</dbReference>
<dbReference type="SMR" id="Q65PC3"/>
<dbReference type="STRING" id="279010.BL07083"/>
<dbReference type="KEGG" id="bld:BLi00117"/>
<dbReference type="KEGG" id="bli:BL07083"/>
<dbReference type="eggNOG" id="COG0267">
    <property type="taxonomic scope" value="Bacteria"/>
</dbReference>
<dbReference type="HOGENOM" id="CLU_190949_0_2_9"/>
<dbReference type="Proteomes" id="UP000000606">
    <property type="component" value="Chromosome"/>
</dbReference>
<dbReference type="GO" id="GO:0005737">
    <property type="term" value="C:cytoplasm"/>
    <property type="evidence" value="ECO:0007669"/>
    <property type="project" value="UniProtKB-ARBA"/>
</dbReference>
<dbReference type="GO" id="GO:1990904">
    <property type="term" value="C:ribonucleoprotein complex"/>
    <property type="evidence" value="ECO:0007669"/>
    <property type="project" value="UniProtKB-KW"/>
</dbReference>
<dbReference type="GO" id="GO:0005840">
    <property type="term" value="C:ribosome"/>
    <property type="evidence" value="ECO:0007669"/>
    <property type="project" value="UniProtKB-KW"/>
</dbReference>
<dbReference type="GO" id="GO:0003735">
    <property type="term" value="F:structural constituent of ribosome"/>
    <property type="evidence" value="ECO:0007669"/>
    <property type="project" value="InterPro"/>
</dbReference>
<dbReference type="GO" id="GO:0006412">
    <property type="term" value="P:translation"/>
    <property type="evidence" value="ECO:0007669"/>
    <property type="project" value="UniProtKB-UniRule"/>
</dbReference>
<dbReference type="Gene3D" id="2.20.28.120">
    <property type="entry name" value="Ribosomal protein L33"/>
    <property type="match status" value="1"/>
</dbReference>
<dbReference type="HAMAP" id="MF_00294">
    <property type="entry name" value="Ribosomal_bL33"/>
    <property type="match status" value="1"/>
</dbReference>
<dbReference type="InterPro" id="IPR001705">
    <property type="entry name" value="Ribosomal_bL33"/>
</dbReference>
<dbReference type="InterPro" id="IPR018264">
    <property type="entry name" value="Ribosomal_bL33_CS"/>
</dbReference>
<dbReference type="InterPro" id="IPR038584">
    <property type="entry name" value="Ribosomal_bL33_sf"/>
</dbReference>
<dbReference type="InterPro" id="IPR011332">
    <property type="entry name" value="Ribosomal_zn-bd"/>
</dbReference>
<dbReference type="NCBIfam" id="NF001764">
    <property type="entry name" value="PRK00504.1"/>
    <property type="match status" value="1"/>
</dbReference>
<dbReference type="NCBIfam" id="NF001860">
    <property type="entry name" value="PRK00595.1"/>
    <property type="match status" value="1"/>
</dbReference>
<dbReference type="NCBIfam" id="TIGR01023">
    <property type="entry name" value="rpmG_bact"/>
    <property type="match status" value="1"/>
</dbReference>
<dbReference type="Pfam" id="PF00471">
    <property type="entry name" value="Ribosomal_L33"/>
    <property type="match status" value="1"/>
</dbReference>
<dbReference type="SUPFAM" id="SSF57829">
    <property type="entry name" value="Zn-binding ribosomal proteins"/>
    <property type="match status" value="1"/>
</dbReference>
<dbReference type="PROSITE" id="PS00582">
    <property type="entry name" value="RIBOSOMAL_L33"/>
    <property type="match status" value="1"/>
</dbReference>
<evidence type="ECO:0000255" key="1">
    <source>
        <dbReference type="HAMAP-Rule" id="MF_00294"/>
    </source>
</evidence>
<protein>
    <recommendedName>
        <fullName evidence="1">Large ribosomal subunit protein bL33A</fullName>
    </recommendedName>
    <alternativeName>
        <fullName evidence="1">50S ribosomal protein L33 1</fullName>
    </alternativeName>
</protein>
<proteinExistence type="inferred from homology"/>
<organism>
    <name type="scientific">Bacillus licheniformis (strain ATCC 14580 / DSM 13 / JCM 2505 / CCUG 7422 / NBRC 12200 / NCIMB 9375 / NCTC 10341 / NRRL NRS-1264 / Gibson 46)</name>
    <dbReference type="NCBI Taxonomy" id="279010"/>
    <lineage>
        <taxon>Bacteria</taxon>
        <taxon>Bacillati</taxon>
        <taxon>Bacillota</taxon>
        <taxon>Bacilli</taxon>
        <taxon>Bacillales</taxon>
        <taxon>Bacillaceae</taxon>
        <taxon>Bacillus</taxon>
    </lineage>
</organism>
<keyword id="KW-1185">Reference proteome</keyword>
<keyword id="KW-0687">Ribonucleoprotein</keyword>
<keyword id="KW-0689">Ribosomal protein</keyword>
<gene>
    <name evidence="1" type="primary">rpmG1</name>
    <name type="synonym">rpmGB</name>
    <name type="ordered locus">BLi00117</name>
    <name type="ordered locus">BL07083</name>
</gene>
<name>RL331_BACLD</name>
<reference key="1">
    <citation type="journal article" date="2004" name="J. Mol. Microbiol. Biotechnol.">
        <title>The complete genome sequence of Bacillus licheniformis DSM13, an organism with great industrial potential.</title>
        <authorList>
            <person name="Veith B."/>
            <person name="Herzberg C."/>
            <person name="Steckel S."/>
            <person name="Feesche J."/>
            <person name="Maurer K.H."/>
            <person name="Ehrenreich P."/>
            <person name="Baeumer S."/>
            <person name="Henne A."/>
            <person name="Liesegang H."/>
            <person name="Merkl R."/>
            <person name="Ehrenreich A."/>
            <person name="Gottschalk G."/>
        </authorList>
    </citation>
    <scope>NUCLEOTIDE SEQUENCE [LARGE SCALE GENOMIC DNA]</scope>
    <source>
        <strain>ATCC 14580 / DSM 13 / JCM 2505 / CCUG 7422 / NBRC 12200 / NCIMB 9375 / NCTC 10341 / NRRL NRS-1264 / Gibson 46</strain>
    </source>
</reference>
<reference key="2">
    <citation type="journal article" date="2004" name="Genome Biol.">
        <title>Complete genome sequence of the industrial bacterium Bacillus licheniformis and comparisons with closely related Bacillus species.</title>
        <authorList>
            <person name="Rey M.W."/>
            <person name="Ramaiya P."/>
            <person name="Nelson B.A."/>
            <person name="Brody-Karpin S.D."/>
            <person name="Zaretsky E.J."/>
            <person name="Tang M."/>
            <person name="Lopez de Leon A."/>
            <person name="Xiang H."/>
            <person name="Gusti V."/>
            <person name="Clausen I.G."/>
            <person name="Olsen P.B."/>
            <person name="Rasmussen M.D."/>
            <person name="Andersen J.T."/>
            <person name="Joergensen P.L."/>
            <person name="Larsen T.S."/>
            <person name="Sorokin A."/>
            <person name="Bolotin A."/>
            <person name="Lapidus A."/>
            <person name="Galleron N."/>
            <person name="Ehrlich S.D."/>
            <person name="Berka R.M."/>
        </authorList>
    </citation>
    <scope>NUCLEOTIDE SEQUENCE [LARGE SCALE GENOMIC DNA]</scope>
    <source>
        <strain>ATCC 14580 / DSM 13 / JCM 2505 / CCUG 7422 / NBRC 12200 / NCIMB 9375 / NCTC 10341 / NRRL NRS-1264 / Gibson 46</strain>
    </source>
</reference>
<accession>Q65PC3</accession>
<comment type="similarity">
    <text evidence="1">Belongs to the bacterial ribosomal protein bL33 family.</text>
</comment>